<reference key="1">
    <citation type="journal article" date="2009" name="Vaccine">
        <title>Whole genome sequence analysis of Mycobacterium bovis bacillus Calmette-Guerin (BCG) Tokyo 172: a comparative study of BCG vaccine substrains.</title>
        <authorList>
            <person name="Seki M."/>
            <person name="Honda I."/>
            <person name="Fujita I."/>
            <person name="Yano I."/>
            <person name="Yamamoto S."/>
            <person name="Koyama A."/>
        </authorList>
    </citation>
    <scope>NUCLEOTIDE SEQUENCE [LARGE SCALE GENOMIC DNA]</scope>
    <source>
        <strain>BCG / Tokyo 172 / ATCC 35737 / TMC 1019</strain>
    </source>
</reference>
<comment type="function">
    <text evidence="1">ATPase which is responsible for recognizing, binding, unfolding and translocation of pupylated proteins into the bacterial 20S proteasome core particle. May be essential for opening the gate of the 20S proteasome via an interaction with its C-terminus, thereby allowing substrate entry and access to the site of proteolysis. Thus, the C-termini of the proteasomal ATPase may function like a 'key in a lock' to induce gate opening and therefore regulate proteolysis.</text>
</comment>
<comment type="pathway">
    <text evidence="1">Protein degradation; proteasomal Pup-dependent pathway.</text>
</comment>
<comment type="subunit">
    <text evidence="1">Homohexamer. Assembles into a hexameric ring structure that caps the 20S proteasome core. Strongly interacts with the prokaryotic ubiquitin-like protein Pup through a hydrophobic interface; the interacting region of ARC lies in its N-terminal coiled-coil domain. There is one Pup binding site per ARC hexamer ring. Upon ATP-binding, the C-terminus of ARC interacts with the alpha-rings of the proteasome core, possibly by binding to the intersubunit pockets.</text>
</comment>
<comment type="domain">
    <text evidence="1">Consists of three main regions, an N-terminal coiled-coil domain that binds to protein Pup and functions as a docking station, an interdomain involved in ARC hexamerization, and a C-terminal ATPase domain of the AAA type.</text>
</comment>
<comment type="similarity">
    <text evidence="1">Belongs to the AAA ATPase family.</text>
</comment>
<gene>
    <name evidence="1" type="primary">mpa</name>
    <name type="ordered locus">JTY_2126</name>
</gene>
<organism>
    <name type="scientific">Mycobacterium bovis (strain BCG / Tokyo 172 / ATCC 35737 / TMC 1019)</name>
    <dbReference type="NCBI Taxonomy" id="561275"/>
    <lineage>
        <taxon>Bacteria</taxon>
        <taxon>Bacillati</taxon>
        <taxon>Actinomycetota</taxon>
        <taxon>Actinomycetes</taxon>
        <taxon>Mycobacteriales</taxon>
        <taxon>Mycobacteriaceae</taxon>
        <taxon>Mycobacterium</taxon>
        <taxon>Mycobacterium tuberculosis complex</taxon>
    </lineage>
</organism>
<protein>
    <recommendedName>
        <fullName evidence="1">Proteasome-associated ATPase</fullName>
    </recommendedName>
    <alternativeName>
        <fullName evidence="1">AAA ATPase forming ring-shaped complexes</fullName>
        <shortName evidence="1">ARC</shortName>
    </alternativeName>
    <alternativeName>
        <fullName evidence="1">Mycobacterial proteasome ATPase</fullName>
    </alternativeName>
</protein>
<name>ARC_MYCBT</name>
<sequence length="609" mass="67401">MGESERSEAFGIPRDSPLSSGDAAELEQLRREAAVLREQLENAVGSHAPTRSARDIHQLEARIDSLAARNSKLMETLKEARQQLLALREEVDRLGQPPSGYGVLLATHDDDTVDVFTSGRKMRLTCSPNIDAASLKKGQTVRLNEALTVVEAGTFEAVGEISTLREILADGHRALVVGHADEERVVWLADPLIAEDLPDGLPEALNDDTRPRKLRPGDSLLVDTKAGYAFERIPKAEVEDLVLEEVPDVSYADIGGLSRQIEQIRDAVELPFLHKELYREYSLRPPKGVLLYGPPGCGKTLIAKAVANSLAKKMAEVRGDDAHEAKSYFLNIKGPELLNKFVGETERHIRLIFQRAREKASEGTPVIVFFDEMDSIFRTRGTGVSSDVETTVVPQLLSEIDGVEGLENVIVIGASNREDMIDPAILRPGRLDVKIKIERPDAEAAQDIYSKYLTEFLPVHADDLAEFDGDRSACIKAMIEKVVDRMYAEIDDNRFLEVTYANGDKEVMYFKDFNSGAMIQNVVDRAKKNAIKSVLETGQPGLRIQHLLDSIVDEFAENEDLPNTTNPDDWARISGKKGERIVYIRTLVTGKSSSASRAIDTESNLGQYL</sequence>
<proteinExistence type="inferred from homology"/>
<feature type="chain" id="PRO_0000396995" description="Proteasome-associated ATPase">
    <location>
        <begin position="1"/>
        <end position="609"/>
    </location>
</feature>
<feature type="region of interest" description="Disordered" evidence="2">
    <location>
        <begin position="1"/>
        <end position="24"/>
    </location>
</feature>
<feature type="region of interest" description="Docks into pockets in the proteasome alpha-ring" evidence="1">
    <location>
        <begin position="608"/>
        <end position="609"/>
    </location>
</feature>
<feature type="coiled-coil region" evidence="1">
    <location>
        <begin position="20"/>
        <end position="96"/>
    </location>
</feature>
<feature type="binding site" evidence="1">
    <location>
        <begin position="296"/>
        <end position="301"/>
    </location>
    <ligand>
        <name>ATP</name>
        <dbReference type="ChEBI" id="CHEBI:30616"/>
    </ligand>
</feature>
<dbReference type="EMBL" id="AP010918">
    <property type="protein sequence ID" value="BAH26410.1"/>
    <property type="molecule type" value="Genomic_DNA"/>
</dbReference>
<dbReference type="SMR" id="C1AQ31"/>
<dbReference type="KEGG" id="mbt:JTY_2126"/>
<dbReference type="HOGENOM" id="CLU_036054_0_0_11"/>
<dbReference type="UniPathway" id="UPA00997"/>
<dbReference type="GO" id="GO:0000502">
    <property type="term" value="C:proteasome complex"/>
    <property type="evidence" value="ECO:0007669"/>
    <property type="project" value="UniProtKB-KW"/>
</dbReference>
<dbReference type="GO" id="GO:0005524">
    <property type="term" value="F:ATP binding"/>
    <property type="evidence" value="ECO:0007669"/>
    <property type="project" value="UniProtKB-UniRule"/>
</dbReference>
<dbReference type="GO" id="GO:0016887">
    <property type="term" value="F:ATP hydrolysis activity"/>
    <property type="evidence" value="ECO:0007669"/>
    <property type="project" value="UniProtKB-UniRule"/>
</dbReference>
<dbReference type="GO" id="GO:0019941">
    <property type="term" value="P:modification-dependent protein catabolic process"/>
    <property type="evidence" value="ECO:0007669"/>
    <property type="project" value="InterPro"/>
</dbReference>
<dbReference type="GO" id="GO:0010498">
    <property type="term" value="P:proteasomal protein catabolic process"/>
    <property type="evidence" value="ECO:0007669"/>
    <property type="project" value="InterPro"/>
</dbReference>
<dbReference type="FunFam" id="1.10.8.60:FF:000122">
    <property type="entry name" value="AAA ATPase forming ring-shaped complexes"/>
    <property type="match status" value="1"/>
</dbReference>
<dbReference type="FunFam" id="1.20.5.170:FF:000018">
    <property type="entry name" value="AAA ATPase forming ring-shaped complexes"/>
    <property type="match status" value="1"/>
</dbReference>
<dbReference type="FunFam" id="2.40.50.140:FF:000169">
    <property type="entry name" value="AAA ATPase forming ring-shaped complexes"/>
    <property type="match status" value="1"/>
</dbReference>
<dbReference type="FunFam" id="3.40.50.300:FF:000155">
    <property type="entry name" value="AAA ATPase forming ring-shaped complexes"/>
    <property type="match status" value="1"/>
</dbReference>
<dbReference type="Gene3D" id="1.10.8.60">
    <property type="match status" value="1"/>
</dbReference>
<dbReference type="Gene3D" id="1.20.5.170">
    <property type="match status" value="1"/>
</dbReference>
<dbReference type="Gene3D" id="2.40.50.140">
    <property type="entry name" value="Nucleic acid-binding proteins"/>
    <property type="match status" value="2"/>
</dbReference>
<dbReference type="Gene3D" id="3.40.50.300">
    <property type="entry name" value="P-loop containing nucleotide triphosphate hydrolases"/>
    <property type="match status" value="1"/>
</dbReference>
<dbReference type="HAMAP" id="MF_02112">
    <property type="entry name" value="ARC_ATPase"/>
    <property type="match status" value="1"/>
</dbReference>
<dbReference type="InterPro" id="IPR003593">
    <property type="entry name" value="AAA+_ATPase"/>
</dbReference>
<dbReference type="InterPro" id="IPR050168">
    <property type="entry name" value="AAA_ATPase_domain"/>
</dbReference>
<dbReference type="InterPro" id="IPR003959">
    <property type="entry name" value="ATPase_AAA_core"/>
</dbReference>
<dbReference type="InterPro" id="IPR003960">
    <property type="entry name" value="ATPase_AAA_CS"/>
</dbReference>
<dbReference type="InterPro" id="IPR012340">
    <property type="entry name" value="NA-bd_OB-fold"/>
</dbReference>
<dbReference type="InterPro" id="IPR027417">
    <property type="entry name" value="P-loop_NTPase"/>
</dbReference>
<dbReference type="InterPro" id="IPR032501">
    <property type="entry name" value="Prot_ATP_ID_OB_2nd"/>
</dbReference>
<dbReference type="InterPro" id="IPR041626">
    <property type="entry name" value="Prot_ATP_ID_OB_N"/>
</dbReference>
<dbReference type="InterPro" id="IPR022482">
    <property type="entry name" value="Proteasome_ATPase"/>
</dbReference>
<dbReference type="NCBIfam" id="TIGR03689">
    <property type="entry name" value="pup_AAA"/>
    <property type="match status" value="1"/>
</dbReference>
<dbReference type="PANTHER" id="PTHR23077">
    <property type="entry name" value="AAA-FAMILY ATPASE"/>
    <property type="match status" value="1"/>
</dbReference>
<dbReference type="PANTHER" id="PTHR23077:SF144">
    <property type="entry name" value="PROTEASOME-ASSOCIATED ATPASE"/>
    <property type="match status" value="1"/>
</dbReference>
<dbReference type="Pfam" id="PF00004">
    <property type="entry name" value="AAA"/>
    <property type="match status" value="1"/>
</dbReference>
<dbReference type="Pfam" id="PF16450">
    <property type="entry name" value="Prot_ATP_ID_OB_C"/>
    <property type="match status" value="1"/>
</dbReference>
<dbReference type="Pfam" id="PF17758">
    <property type="entry name" value="Prot_ATP_ID_OB_N"/>
    <property type="match status" value="1"/>
</dbReference>
<dbReference type="SMART" id="SM00382">
    <property type="entry name" value="AAA"/>
    <property type="match status" value="1"/>
</dbReference>
<dbReference type="SUPFAM" id="SSF52540">
    <property type="entry name" value="P-loop containing nucleoside triphosphate hydrolases"/>
    <property type="match status" value="1"/>
</dbReference>
<dbReference type="PROSITE" id="PS00674">
    <property type="entry name" value="AAA"/>
    <property type="match status" value="1"/>
</dbReference>
<evidence type="ECO:0000255" key="1">
    <source>
        <dbReference type="HAMAP-Rule" id="MF_02112"/>
    </source>
</evidence>
<evidence type="ECO:0000256" key="2">
    <source>
        <dbReference type="SAM" id="MobiDB-lite"/>
    </source>
</evidence>
<accession>C1AQ31</accession>
<keyword id="KW-0067">ATP-binding</keyword>
<keyword id="KW-0143">Chaperone</keyword>
<keyword id="KW-0175">Coiled coil</keyword>
<keyword id="KW-0547">Nucleotide-binding</keyword>
<keyword id="KW-0647">Proteasome</keyword>